<reference key="1">
    <citation type="journal article" date="2001" name="Nature">
        <title>Massive gene decay in the leprosy bacillus.</title>
        <authorList>
            <person name="Cole S.T."/>
            <person name="Eiglmeier K."/>
            <person name="Parkhill J."/>
            <person name="James K.D."/>
            <person name="Thomson N.R."/>
            <person name="Wheeler P.R."/>
            <person name="Honore N."/>
            <person name="Garnier T."/>
            <person name="Churcher C.M."/>
            <person name="Harris D.E."/>
            <person name="Mungall K.L."/>
            <person name="Basham D."/>
            <person name="Brown D."/>
            <person name="Chillingworth T."/>
            <person name="Connor R."/>
            <person name="Davies R.M."/>
            <person name="Devlin K."/>
            <person name="Duthoy S."/>
            <person name="Feltwell T."/>
            <person name="Fraser A."/>
            <person name="Hamlin N."/>
            <person name="Holroyd S."/>
            <person name="Hornsby T."/>
            <person name="Jagels K."/>
            <person name="Lacroix C."/>
            <person name="Maclean J."/>
            <person name="Moule S."/>
            <person name="Murphy L.D."/>
            <person name="Oliver K."/>
            <person name="Quail M.A."/>
            <person name="Rajandream M.A."/>
            <person name="Rutherford K.M."/>
            <person name="Rutter S."/>
            <person name="Seeger K."/>
            <person name="Simon S."/>
            <person name="Simmonds M."/>
            <person name="Skelton J."/>
            <person name="Squares R."/>
            <person name="Squares S."/>
            <person name="Stevens K."/>
            <person name="Taylor K."/>
            <person name="Whitehead S."/>
            <person name="Woodward J.R."/>
            <person name="Barrell B.G."/>
        </authorList>
    </citation>
    <scope>NUCLEOTIDE SEQUENCE [LARGE SCALE GENOMIC DNA]</scope>
    <source>
        <strain>TN</strain>
    </source>
</reference>
<dbReference type="EC" id="4.3.3.6" evidence="1"/>
<dbReference type="EMBL" id="Z96801">
    <property type="protein sequence ID" value="CAB09637.1"/>
    <property type="status" value="ALT_INIT"/>
    <property type="molecule type" value="Genomic_DNA"/>
</dbReference>
<dbReference type="EMBL" id="AL583918">
    <property type="protein sequence ID" value="CAC29958.1"/>
    <property type="molecule type" value="Genomic_DNA"/>
</dbReference>
<dbReference type="PIR" id="B86965">
    <property type="entry name" value="B86965"/>
</dbReference>
<dbReference type="RefSeq" id="NP_301404.1">
    <property type="nucleotide sequence ID" value="NC_002677.1"/>
</dbReference>
<dbReference type="RefSeq" id="WP_010907728.1">
    <property type="nucleotide sequence ID" value="NC_002677.1"/>
</dbReference>
<dbReference type="SMR" id="O07145"/>
<dbReference type="STRING" id="272631.gene:17574271"/>
<dbReference type="KEGG" id="mle:ML0450"/>
<dbReference type="PATRIC" id="fig|272631.5.peg.793"/>
<dbReference type="Leproma" id="ML0450"/>
<dbReference type="eggNOG" id="COG0214">
    <property type="taxonomic scope" value="Bacteria"/>
</dbReference>
<dbReference type="HOGENOM" id="CLU_055352_1_0_11"/>
<dbReference type="OrthoDB" id="9772545at2"/>
<dbReference type="UniPathway" id="UPA00245"/>
<dbReference type="Proteomes" id="UP000000806">
    <property type="component" value="Chromosome"/>
</dbReference>
<dbReference type="GO" id="GO:0036381">
    <property type="term" value="F:pyridoxal 5'-phosphate synthase (glutamine hydrolysing) activity"/>
    <property type="evidence" value="ECO:0007669"/>
    <property type="project" value="UniProtKB-UniRule"/>
</dbReference>
<dbReference type="GO" id="GO:0006520">
    <property type="term" value="P:amino acid metabolic process"/>
    <property type="evidence" value="ECO:0007669"/>
    <property type="project" value="TreeGrafter"/>
</dbReference>
<dbReference type="GO" id="GO:0042823">
    <property type="term" value="P:pyridoxal phosphate biosynthetic process"/>
    <property type="evidence" value="ECO:0007669"/>
    <property type="project" value="UniProtKB-UniRule"/>
</dbReference>
<dbReference type="GO" id="GO:0008615">
    <property type="term" value="P:pyridoxine biosynthetic process"/>
    <property type="evidence" value="ECO:0007669"/>
    <property type="project" value="TreeGrafter"/>
</dbReference>
<dbReference type="CDD" id="cd04727">
    <property type="entry name" value="pdxS"/>
    <property type="match status" value="1"/>
</dbReference>
<dbReference type="FunFam" id="3.20.20.70:FF:000001">
    <property type="entry name" value="Pyridoxine biosynthesis protein PDX1"/>
    <property type="match status" value="1"/>
</dbReference>
<dbReference type="Gene3D" id="3.20.20.70">
    <property type="entry name" value="Aldolase class I"/>
    <property type="match status" value="1"/>
</dbReference>
<dbReference type="HAMAP" id="MF_01824">
    <property type="entry name" value="PdxS"/>
    <property type="match status" value="1"/>
</dbReference>
<dbReference type="InterPro" id="IPR013785">
    <property type="entry name" value="Aldolase_TIM"/>
</dbReference>
<dbReference type="InterPro" id="IPR001852">
    <property type="entry name" value="PdxS/SNZ"/>
</dbReference>
<dbReference type="InterPro" id="IPR033755">
    <property type="entry name" value="PdxS/SNZ_N"/>
</dbReference>
<dbReference type="InterPro" id="IPR011060">
    <property type="entry name" value="RibuloseP-bd_barrel"/>
</dbReference>
<dbReference type="NCBIfam" id="NF003215">
    <property type="entry name" value="PRK04180.1"/>
    <property type="match status" value="1"/>
</dbReference>
<dbReference type="NCBIfam" id="TIGR00343">
    <property type="entry name" value="pyridoxal 5'-phosphate synthase lyase subunit PdxS"/>
    <property type="match status" value="1"/>
</dbReference>
<dbReference type="PANTHER" id="PTHR31829">
    <property type="entry name" value="PYRIDOXAL 5'-PHOSPHATE SYNTHASE SUBUNIT SNZ1-RELATED"/>
    <property type="match status" value="1"/>
</dbReference>
<dbReference type="PANTHER" id="PTHR31829:SF0">
    <property type="entry name" value="PYRIDOXAL 5'-PHOSPHATE SYNTHASE SUBUNIT SNZ1-RELATED"/>
    <property type="match status" value="1"/>
</dbReference>
<dbReference type="Pfam" id="PF01680">
    <property type="entry name" value="SOR_SNZ"/>
    <property type="match status" value="1"/>
</dbReference>
<dbReference type="PIRSF" id="PIRSF029271">
    <property type="entry name" value="Pdx1"/>
    <property type="match status" value="1"/>
</dbReference>
<dbReference type="SUPFAM" id="SSF51366">
    <property type="entry name" value="Ribulose-phoshate binding barrel"/>
    <property type="match status" value="1"/>
</dbReference>
<dbReference type="PROSITE" id="PS01235">
    <property type="entry name" value="PDXS_SNZ_1"/>
    <property type="match status" value="1"/>
</dbReference>
<dbReference type="PROSITE" id="PS51129">
    <property type="entry name" value="PDXS_SNZ_2"/>
    <property type="match status" value="1"/>
</dbReference>
<protein>
    <recommendedName>
        <fullName evidence="1">Pyridoxal 5'-phosphate synthase subunit PdxS</fullName>
        <shortName evidence="1">PLP synthase subunit PdxS</shortName>
        <ecNumber evidence="1">4.3.3.6</ecNumber>
    </recommendedName>
    <alternativeName>
        <fullName evidence="1">Pdx1</fullName>
    </alternativeName>
</protein>
<name>PDXS_MYCLE</name>
<gene>
    <name evidence="1" type="primary">pdxS</name>
    <name type="ordered locus">ML0450</name>
    <name type="ORF">MLCL581.12c</name>
</gene>
<sequence>MDSAAQSNQAQSVFGQTGTARVKRGMAEMLKGGVIMDVVIPEQARIAEGSGAVAVMALERVPSDIRAQGGVSRMSDPDMIESIIAAVTIPVMAKARIGHFVEAQILQSLGVDYIDESEVLTPADYTHHIDKWKFTVPFVCGATNLGEALRRINEGAAMIRSKGEAGTGDVSNATTHMRAIAGDIRRLTSLSEDELYVAAKELHAPYELVIEVARTNKLPVTLFTAGGIATPADAAMMMQLGAEGIFVGSGIFKSSDPAQRAAAIVKATTFYDDPDVLAKVSRGLGEAMAGIDVEQIAQPDRLAQRGW</sequence>
<proteinExistence type="inferred from homology"/>
<evidence type="ECO:0000255" key="1">
    <source>
        <dbReference type="HAMAP-Rule" id="MF_01824"/>
    </source>
</evidence>
<evidence type="ECO:0000305" key="2"/>
<accession>O07145</accession>
<accession>Q9CCU1</accession>
<feature type="chain" id="PRO_0000109403" description="Pyridoxal 5'-phosphate synthase subunit PdxS">
    <location>
        <begin position="1"/>
        <end position="307"/>
    </location>
</feature>
<feature type="active site" description="Schiff-base intermediate with D-ribose 5-phosphate" evidence="1">
    <location>
        <position position="94"/>
    </location>
</feature>
<feature type="binding site" evidence="1">
    <location>
        <position position="37"/>
    </location>
    <ligand>
        <name>D-ribose 5-phosphate</name>
        <dbReference type="ChEBI" id="CHEBI:78346"/>
    </ligand>
</feature>
<feature type="binding site" evidence="1">
    <location>
        <position position="166"/>
    </location>
    <ligand>
        <name>D-ribose 5-phosphate</name>
        <dbReference type="ChEBI" id="CHEBI:78346"/>
    </ligand>
</feature>
<feature type="binding site" evidence="1">
    <location>
        <position position="178"/>
    </location>
    <ligand>
        <name>D-glyceraldehyde 3-phosphate</name>
        <dbReference type="ChEBI" id="CHEBI:59776"/>
    </ligand>
</feature>
<feature type="binding site" evidence="1">
    <location>
        <position position="227"/>
    </location>
    <ligand>
        <name>D-ribose 5-phosphate</name>
        <dbReference type="ChEBI" id="CHEBI:78346"/>
    </ligand>
</feature>
<feature type="binding site" evidence="1">
    <location>
        <begin position="248"/>
        <end position="249"/>
    </location>
    <ligand>
        <name>D-ribose 5-phosphate</name>
        <dbReference type="ChEBI" id="CHEBI:78346"/>
    </ligand>
</feature>
<organism>
    <name type="scientific">Mycobacterium leprae (strain TN)</name>
    <dbReference type="NCBI Taxonomy" id="272631"/>
    <lineage>
        <taxon>Bacteria</taxon>
        <taxon>Bacillati</taxon>
        <taxon>Actinomycetota</taxon>
        <taxon>Actinomycetes</taxon>
        <taxon>Mycobacteriales</taxon>
        <taxon>Mycobacteriaceae</taxon>
        <taxon>Mycobacterium</taxon>
    </lineage>
</organism>
<comment type="function">
    <text evidence="1">Catalyzes the formation of pyridoxal 5'-phosphate from ribose 5-phosphate (RBP), glyceraldehyde 3-phosphate (G3P) and ammonia. The ammonia is provided by the PdxT subunit. Can also use ribulose 5-phosphate and dihydroxyacetone phosphate as substrates, resulting from enzyme-catalyzed isomerization of RBP and G3P, respectively.</text>
</comment>
<comment type="catalytic activity">
    <reaction evidence="1">
        <text>aldehydo-D-ribose 5-phosphate + D-glyceraldehyde 3-phosphate + L-glutamine = pyridoxal 5'-phosphate + L-glutamate + phosphate + 3 H2O + H(+)</text>
        <dbReference type="Rhea" id="RHEA:31507"/>
        <dbReference type="ChEBI" id="CHEBI:15377"/>
        <dbReference type="ChEBI" id="CHEBI:15378"/>
        <dbReference type="ChEBI" id="CHEBI:29985"/>
        <dbReference type="ChEBI" id="CHEBI:43474"/>
        <dbReference type="ChEBI" id="CHEBI:58273"/>
        <dbReference type="ChEBI" id="CHEBI:58359"/>
        <dbReference type="ChEBI" id="CHEBI:59776"/>
        <dbReference type="ChEBI" id="CHEBI:597326"/>
        <dbReference type="EC" id="4.3.3.6"/>
    </reaction>
</comment>
<comment type="pathway">
    <text evidence="1">Cofactor biosynthesis; pyridoxal 5'-phosphate biosynthesis.</text>
</comment>
<comment type="subunit">
    <text evidence="1">In the presence of PdxT, forms a dodecamer of heterodimers.</text>
</comment>
<comment type="similarity">
    <text evidence="1">Belongs to the PdxS/SNZ family.</text>
</comment>
<comment type="sequence caution" evidence="2">
    <conflict type="erroneous initiation">
        <sequence resource="EMBL-CDS" id="CAB09637"/>
    </conflict>
</comment>
<keyword id="KW-0456">Lyase</keyword>
<keyword id="KW-0663">Pyridoxal phosphate</keyword>
<keyword id="KW-1185">Reference proteome</keyword>
<keyword id="KW-0704">Schiff base</keyword>